<proteinExistence type="inferred from homology"/>
<feature type="chain" id="PRO_1000188719" description="Arginine exporter protein ArgO">
    <location>
        <begin position="1"/>
        <end position="211"/>
    </location>
</feature>
<feature type="transmembrane region" description="Helical" evidence="1">
    <location>
        <begin position="1"/>
        <end position="21"/>
    </location>
</feature>
<feature type="transmembrane region" description="Helical" evidence="1">
    <location>
        <begin position="37"/>
        <end position="57"/>
    </location>
</feature>
<feature type="transmembrane region" description="Helical" evidence="1">
    <location>
        <begin position="68"/>
        <end position="88"/>
    </location>
</feature>
<feature type="transmembrane region" description="Helical" evidence="1">
    <location>
        <begin position="111"/>
        <end position="131"/>
    </location>
</feature>
<feature type="transmembrane region" description="Helical" evidence="1">
    <location>
        <begin position="147"/>
        <end position="167"/>
    </location>
</feature>
<feature type="transmembrane region" description="Helical" evidence="1">
    <location>
        <begin position="179"/>
        <end position="199"/>
    </location>
</feature>
<dbReference type="EMBL" id="AM933172">
    <property type="protein sequence ID" value="CAR34487.1"/>
    <property type="molecule type" value="Genomic_DNA"/>
</dbReference>
<dbReference type="RefSeq" id="WP_000626870.1">
    <property type="nucleotide sequence ID" value="NC_011294.1"/>
</dbReference>
<dbReference type="KEGG" id="set:SEN2909"/>
<dbReference type="HOGENOM" id="CLU_087840_0_1_6"/>
<dbReference type="Proteomes" id="UP000000613">
    <property type="component" value="Chromosome"/>
</dbReference>
<dbReference type="GO" id="GO:0005886">
    <property type="term" value="C:plasma membrane"/>
    <property type="evidence" value="ECO:0007669"/>
    <property type="project" value="UniProtKB-SubCell"/>
</dbReference>
<dbReference type="GO" id="GO:0061459">
    <property type="term" value="F:L-arginine transmembrane transporter activity"/>
    <property type="evidence" value="ECO:0007669"/>
    <property type="project" value="UniProtKB-UniRule"/>
</dbReference>
<dbReference type="HAMAP" id="MF_01901">
    <property type="entry name" value="ArgO"/>
    <property type="match status" value="1"/>
</dbReference>
<dbReference type="InterPro" id="IPR023445">
    <property type="entry name" value="Arg_export_ArgO_enterobac"/>
</dbReference>
<dbReference type="InterPro" id="IPR001123">
    <property type="entry name" value="LeuE-type"/>
</dbReference>
<dbReference type="InterPro" id="IPR004777">
    <property type="entry name" value="Lys/arg_exporter"/>
</dbReference>
<dbReference type="NCBIfam" id="TIGR00948">
    <property type="entry name" value="2a75"/>
    <property type="match status" value="1"/>
</dbReference>
<dbReference type="NCBIfam" id="NF006801">
    <property type="entry name" value="PRK09304.1"/>
    <property type="match status" value="1"/>
</dbReference>
<dbReference type="PANTHER" id="PTHR30086">
    <property type="entry name" value="ARGININE EXPORTER PROTEIN ARGO"/>
    <property type="match status" value="1"/>
</dbReference>
<dbReference type="PANTHER" id="PTHR30086:SF20">
    <property type="entry name" value="ARGININE EXPORTER PROTEIN ARGO-RELATED"/>
    <property type="match status" value="1"/>
</dbReference>
<dbReference type="Pfam" id="PF01810">
    <property type="entry name" value="LysE"/>
    <property type="match status" value="1"/>
</dbReference>
<evidence type="ECO:0000255" key="1">
    <source>
        <dbReference type="HAMAP-Rule" id="MF_01901"/>
    </source>
</evidence>
<comment type="function">
    <text evidence="1">Involved in the export of arginine. Important to control the intracellular level of arginine and the correct balance between arginine and lysine.</text>
</comment>
<comment type="catalytic activity">
    <reaction evidence="1">
        <text>L-arginine(in) = L-arginine(out)</text>
        <dbReference type="Rhea" id="RHEA:32143"/>
        <dbReference type="ChEBI" id="CHEBI:32682"/>
    </reaction>
    <physiologicalReaction direction="left-to-right" evidence="1">
        <dbReference type="Rhea" id="RHEA:32144"/>
    </physiologicalReaction>
</comment>
<comment type="subcellular location">
    <subcellularLocation>
        <location evidence="1">Cell inner membrane</location>
        <topology evidence="1">Multi-pass membrane protein</topology>
    </subcellularLocation>
</comment>
<comment type="similarity">
    <text evidence="1">Belongs to the LysE/ArgO transporter (TC 2.A.75) family.</text>
</comment>
<name>ARGO_SALEP</name>
<accession>B5QXJ3</accession>
<reference key="1">
    <citation type="journal article" date="2008" name="Genome Res.">
        <title>Comparative genome analysis of Salmonella enteritidis PT4 and Salmonella gallinarum 287/91 provides insights into evolutionary and host adaptation pathways.</title>
        <authorList>
            <person name="Thomson N.R."/>
            <person name="Clayton D.J."/>
            <person name="Windhorst D."/>
            <person name="Vernikos G."/>
            <person name="Davidson S."/>
            <person name="Churcher C."/>
            <person name="Quail M.A."/>
            <person name="Stevens M."/>
            <person name="Jones M.A."/>
            <person name="Watson M."/>
            <person name="Barron A."/>
            <person name="Layton A."/>
            <person name="Pickard D."/>
            <person name="Kingsley R.A."/>
            <person name="Bignell A."/>
            <person name="Clark L."/>
            <person name="Harris B."/>
            <person name="Ormond D."/>
            <person name="Abdellah Z."/>
            <person name="Brooks K."/>
            <person name="Cherevach I."/>
            <person name="Chillingworth T."/>
            <person name="Woodward J."/>
            <person name="Norberczak H."/>
            <person name="Lord A."/>
            <person name="Arrowsmith C."/>
            <person name="Jagels K."/>
            <person name="Moule S."/>
            <person name="Mungall K."/>
            <person name="Saunders M."/>
            <person name="Whitehead S."/>
            <person name="Chabalgoity J.A."/>
            <person name="Maskell D."/>
            <person name="Humphreys T."/>
            <person name="Roberts M."/>
            <person name="Barrow P.A."/>
            <person name="Dougan G."/>
            <person name="Parkhill J."/>
        </authorList>
    </citation>
    <scope>NUCLEOTIDE SEQUENCE [LARGE SCALE GENOMIC DNA]</scope>
    <source>
        <strain>P125109</strain>
    </source>
</reference>
<protein>
    <recommendedName>
        <fullName evidence="1">Arginine exporter protein ArgO</fullName>
    </recommendedName>
</protein>
<sequence length="211" mass="23186">MISYYFQGFALGAAMILPLGPQNAFVMNQGIRRQYHLMIALLCALSDLVLISAGIFGGSALLMQSPWLLALVTWGGVAFLLWYGLGALKTAMSSNLELASAEVMKQGRWKIIATMLAVTWLNPHVYLDTFVVLGSLGGQLAMEPKRWFALGTISASFLWFFGLALLAAWLAPRLRTAKAQRIINILVGVVMWLIAFQLAREGVAHMHALFN</sequence>
<gene>
    <name evidence="1" type="primary">argO</name>
    <name type="ordered locus">SEN2909</name>
</gene>
<keyword id="KW-0029">Amino-acid transport</keyword>
<keyword id="KW-0997">Cell inner membrane</keyword>
<keyword id="KW-1003">Cell membrane</keyword>
<keyword id="KW-0472">Membrane</keyword>
<keyword id="KW-0812">Transmembrane</keyword>
<keyword id="KW-1133">Transmembrane helix</keyword>
<keyword id="KW-0813">Transport</keyword>
<organism>
    <name type="scientific">Salmonella enteritidis PT4 (strain P125109)</name>
    <dbReference type="NCBI Taxonomy" id="550537"/>
    <lineage>
        <taxon>Bacteria</taxon>
        <taxon>Pseudomonadati</taxon>
        <taxon>Pseudomonadota</taxon>
        <taxon>Gammaproteobacteria</taxon>
        <taxon>Enterobacterales</taxon>
        <taxon>Enterobacteriaceae</taxon>
        <taxon>Salmonella</taxon>
    </lineage>
</organism>